<name>TRI46_MOUSE</name>
<sequence>MAEGEDMQTFTSIMDALVRISTSMKNMEKELLCPVCQEMYKQPLVLPCTHNVCQACAREVLGQQGYIGHGGDPSSEPTSPASTPSTRSPRLSRRTLPKPDRLDRLLKSGFGTYPGRKRGALHPQTILFPCPACQGDVELGERGLSGLFRNLTLERVVERYRQSVSVGGAILCQLCKPPPLEATKGCTECRATFCNECFKLFHPWGTQKAQHEPTLPTLSFRPKGLMCPDHKEEVTHYCKTCQRLVCQLCRVRRTHSGHKITPVLSAYQALKDKLTKSLAYILGNQDTVQTQICELEETIRHTEVSGQQAKEEVSQLVRGLGAVLEEKRASLLQAIEECQQERLSRLSAQIHEHQSLLDGSGLVGYAQEVLKETDQPCFVQAAKQLHNRIARATEALQTFRPAASSSFRHCQLDVGREMKLLTELSFLRVPEAPVIDTQRTFAYDQIFLCWRLPPHSPPAWHYTVEFRRTDVPAQPGPTRWQRREEVRGTSALLENPDTGSVYVLRVRGCNKAGYGEYSEDVHLHTPPAPVLHFFLDGRWGASRERLAISKDQRAVRSIPGLPLLLAAERLLTGCHLSVDVVLGDVAVTQGRSYWACAVDPASYLVKVGVGLESKLQESFQGAPDVISPRYDPDSGHDSGAEDAAVEALPPFAFLTIGMGKILLGSGASSNAGLTGRDGPTASCTVPLPPRLGICLDYERGRVSFLDAVSFRGLLECPLDCSGPVCPAFCFIGGGAVQLQEPVGTKPERKVTIGGFAKLD</sequence>
<keyword id="KW-0025">Alternative splicing</keyword>
<keyword id="KW-0966">Cell projection</keyword>
<keyword id="KW-0175">Coiled coil</keyword>
<keyword id="KW-0963">Cytoplasm</keyword>
<keyword id="KW-0206">Cytoskeleton</keyword>
<keyword id="KW-0479">Metal-binding</keyword>
<keyword id="KW-0597">Phosphoprotein</keyword>
<keyword id="KW-1185">Reference proteome</keyword>
<keyword id="KW-0677">Repeat</keyword>
<keyword id="KW-0862">Zinc</keyword>
<keyword id="KW-0863">Zinc-finger</keyword>
<comment type="function">
    <text evidence="8">Microtubule-associated protein that is involved in the formation of parallel microtubule bundles linked by cross-bridges in the proximal axon. Required for the uniform orientation and maintenance of the parallel microtubule fascicles, which are important for efficient cargo delivery and trafficking in axons. Thereby also required for proper axon formation, the establishment of neuronal polarity and proper neuronal migration.</text>
</comment>
<comment type="subunit">
    <text evidence="8">Interacts with TUBB3 and TUBA4A.</text>
</comment>
<comment type="subcellular location">
    <subcellularLocation>
        <location evidence="8">Cell projection</location>
        <location evidence="8">Axon</location>
    </subcellularLocation>
    <subcellularLocation>
        <location evidence="8">Cytoplasm</location>
        <location evidence="8">Cytoskeleton</location>
    </subcellularLocation>
    <text evidence="8">Microtubule-associated. Localizes to the proximal part of the axon.</text>
</comment>
<comment type="alternative products">
    <event type="alternative splicing"/>
    <isoform>
        <id>Q7TNM2-1</id>
        <name>1</name>
        <sequence type="displayed"/>
    </isoform>
    <isoform>
        <id>Q7TNM2-2</id>
        <name>2</name>
        <sequence type="described" ref="VSP_011985 VSP_011986 VSP_011987"/>
    </isoform>
</comment>
<comment type="tissue specificity">
    <text evidence="8">Expressed in the central nervous system, including pyramidal neurons and interneurons in the cortex and hippocampus and all neuronal cell types in the cerebral and cerebellar cortex, and in the peripheral nervous system, including the dorsal root ganglion neurons.</text>
</comment>
<comment type="similarity">
    <text evidence="10">Belongs to the TRIM/RBCC family.</text>
</comment>
<protein>
    <recommendedName>
        <fullName>Tripartite motif-containing protein 46</fullName>
    </recommendedName>
    <alternativeName>
        <fullName>Gene Y protein</fullName>
        <shortName>GeneY</shortName>
    </alternativeName>
    <alternativeName>
        <fullName>Tripartite, fibronectin type-III and C-terminal SPRY motif protein</fullName>
    </alternativeName>
</protein>
<gene>
    <name type="primary">Trim46</name>
    <name type="synonym">Trific</name>
</gene>
<organism>
    <name type="scientific">Mus musculus</name>
    <name type="common">Mouse</name>
    <dbReference type="NCBI Taxonomy" id="10090"/>
    <lineage>
        <taxon>Eukaryota</taxon>
        <taxon>Metazoa</taxon>
        <taxon>Chordata</taxon>
        <taxon>Craniata</taxon>
        <taxon>Vertebrata</taxon>
        <taxon>Euteleostomi</taxon>
        <taxon>Mammalia</taxon>
        <taxon>Eutheria</taxon>
        <taxon>Euarchontoglires</taxon>
        <taxon>Glires</taxon>
        <taxon>Rodentia</taxon>
        <taxon>Myomorpha</taxon>
        <taxon>Muroidea</taxon>
        <taxon>Muridae</taxon>
        <taxon>Murinae</taxon>
        <taxon>Mus</taxon>
        <taxon>Mus</taxon>
    </lineage>
</organism>
<feature type="chain" id="PRO_0000056269" description="Tripartite motif-containing protein 46">
    <location>
        <begin position="1"/>
        <end position="759"/>
    </location>
</feature>
<feature type="domain" description="COS" evidence="6">
    <location>
        <begin position="370"/>
        <end position="427"/>
    </location>
</feature>
<feature type="domain" description="Fibronectin type-III" evidence="4">
    <location>
        <begin position="429"/>
        <end position="528"/>
    </location>
</feature>
<feature type="domain" description="B30.2/SPRY" evidence="5">
    <location>
        <begin position="526"/>
        <end position="747"/>
    </location>
</feature>
<feature type="zinc finger region" description="RING-type 1; degenerate" evidence="3">
    <location>
        <begin position="33"/>
        <end position="59"/>
    </location>
</feature>
<feature type="zinc finger region" description="RING-type 2; degenerate" evidence="3">
    <location>
        <begin position="172"/>
        <end position="231"/>
    </location>
</feature>
<feature type="zinc finger region" description="B box-type" evidence="2">
    <location>
        <begin position="222"/>
        <end position="263"/>
    </location>
</feature>
<feature type="region of interest" description="Required for proximal axon localization, axon formation and migration" evidence="8">
    <location>
        <begin position="1"/>
        <end position="166"/>
    </location>
</feature>
<feature type="region of interest" description="Disordered" evidence="7">
    <location>
        <begin position="67"/>
        <end position="98"/>
    </location>
</feature>
<feature type="region of interest" description="Required for microtubule association, proximal axon localization and axon formation" evidence="8">
    <location>
        <begin position="411"/>
        <end position="429"/>
    </location>
</feature>
<feature type="coiled-coil region" evidence="1">
    <location>
        <begin position="322"/>
        <end position="400"/>
    </location>
</feature>
<feature type="compositionally biased region" description="Low complexity" evidence="7">
    <location>
        <begin position="73"/>
        <end position="89"/>
    </location>
</feature>
<feature type="binding site" evidence="2">
    <location>
        <position position="227"/>
    </location>
    <ligand>
        <name>Zn(2+)</name>
        <dbReference type="ChEBI" id="CHEBI:29105"/>
    </ligand>
</feature>
<feature type="binding site" evidence="2">
    <location>
        <position position="230"/>
    </location>
    <ligand>
        <name>Zn(2+)</name>
        <dbReference type="ChEBI" id="CHEBI:29105"/>
    </ligand>
</feature>
<feature type="binding site" evidence="2">
    <location>
        <position position="249"/>
    </location>
    <ligand>
        <name>Zn(2+)</name>
        <dbReference type="ChEBI" id="CHEBI:29105"/>
    </ligand>
</feature>
<feature type="binding site" evidence="2">
    <location>
        <position position="255"/>
    </location>
    <ligand>
        <name>Zn(2+)</name>
        <dbReference type="ChEBI" id="CHEBI:29105"/>
    </ligand>
</feature>
<feature type="modified residue" description="Phosphoserine" evidence="11">
    <location>
        <position position="330"/>
    </location>
</feature>
<feature type="modified residue" description="Phosphoserine" evidence="11">
    <location>
        <position position="627"/>
    </location>
</feature>
<feature type="splice variant" id="VSP_011985" description="In isoform 2." evidence="9">
    <original>MAEGEDMQTFTSIMDALVRISTS</original>
    <variation>MGGALEINAINPEMEGWRQTS</variation>
    <location>
        <begin position="1"/>
        <end position="23"/>
    </location>
</feature>
<feature type="splice variant" id="VSP_011986" description="In isoform 2." evidence="9">
    <original>VPEAPVIDTQRTFAYDQIF</original>
    <variation>GCGHRGLCSGAPQCPRRPS</variation>
    <location>
        <begin position="429"/>
        <end position="447"/>
    </location>
</feature>
<feature type="splice variant" id="VSP_011987" description="In isoform 2." evidence="9">
    <location>
        <begin position="448"/>
        <end position="759"/>
    </location>
</feature>
<feature type="sequence conflict" description="In Ref. 3; AAA98539." evidence="10" ref="3">
    <original>G</original>
    <variation>A</variation>
    <location>
        <position position="743"/>
    </location>
</feature>
<proteinExistence type="evidence at protein level"/>
<reference key="1">
    <citation type="journal article" date="2006" name="J. Biol. Chem.">
        <title>Subclassification of the RBCC/TRIM superfamily reveals a novel motif necessary for microtubule binding.</title>
        <authorList>
            <person name="Short K.M."/>
            <person name="Cox T.C."/>
        </authorList>
    </citation>
    <scope>NUCLEOTIDE SEQUENCE [MRNA] (ISOFORM 1)</scope>
    <source>
        <strain>C57BL/6J</strain>
    </source>
</reference>
<reference key="2">
    <citation type="journal article" date="2004" name="Genome Res.">
        <title>The status, quality, and expansion of the NIH full-length cDNA project: the Mammalian Gene Collection (MGC).</title>
        <authorList>
            <consortium name="The MGC Project Team"/>
        </authorList>
    </citation>
    <scope>NUCLEOTIDE SEQUENCE [LARGE SCALE MRNA] (ISOFORM 2)</scope>
    <source>
        <strain>C57BL/6J</strain>
        <tissue>Brain</tissue>
    </source>
</reference>
<reference key="3">
    <citation type="journal article" date="1995" name="Mamm. Genome">
        <title>A tightly organized, conserved gene cluster on mouse chromosome 3 (E3-F1).</title>
        <authorList>
            <person name="Vos H.L."/>
            <person name="Mockensturm-Wilson M."/>
            <person name="Rood P.M.L."/>
            <person name="Maas A.M."/>
            <person name="Duhig T."/>
            <person name="Gendler S.J."/>
            <person name="Bornstein P."/>
        </authorList>
    </citation>
    <scope>NUCLEOTIDE SEQUENCE [GENOMIC DNA] OF 630-759 (ISOFORM 1)</scope>
    <source>
        <strain>BALB/cJ</strain>
    </source>
</reference>
<reference key="4">
    <citation type="journal article" date="2010" name="Cell">
        <title>A tissue-specific atlas of mouse protein phosphorylation and expression.</title>
        <authorList>
            <person name="Huttlin E.L."/>
            <person name="Jedrychowski M.P."/>
            <person name="Elias J.E."/>
            <person name="Goswami T."/>
            <person name="Rad R."/>
            <person name="Beausoleil S.A."/>
            <person name="Villen J."/>
            <person name="Haas W."/>
            <person name="Sowa M.E."/>
            <person name="Gygi S.P."/>
        </authorList>
    </citation>
    <scope>PHOSPHORYLATION [LARGE SCALE ANALYSIS] AT SER-330 AND SER-627</scope>
    <scope>IDENTIFICATION BY MASS SPECTROMETRY [LARGE SCALE ANALYSIS]</scope>
    <source>
        <tissue>Brain</tissue>
    </source>
</reference>
<reference key="5">
    <citation type="journal article" date="2015" name="Neuron">
        <title>TRIM46 controls neuronal polarity and axon specification by driving the formation of parallel microtubule arrays.</title>
        <authorList>
            <person name="van Beuningen S.F."/>
            <person name="Will L."/>
            <person name="Harterink M."/>
            <person name="Chazeau A."/>
            <person name="van Battum E.Y."/>
            <person name="Frias C.P."/>
            <person name="Franker M.A."/>
            <person name="Katrukha E.A."/>
            <person name="Stucchi R."/>
            <person name="Vocking K."/>
            <person name="Antunes A.T."/>
            <person name="Slenders L."/>
            <person name="Doulkeridou S."/>
            <person name="Sillevis Smitt P."/>
            <person name="Altelaar A.F."/>
            <person name="Post J.A."/>
            <person name="Akhmanova A."/>
            <person name="Pasterkamp R.J."/>
            <person name="Kapitein L.C."/>
            <person name="de Graaff E."/>
            <person name="Hoogenraad C.C."/>
        </authorList>
    </citation>
    <scope>FUNCTION</scope>
    <scope>INTERACTION WITH TUBB3 AND TUBA4A</scope>
    <scope>SUBCELLULAR LOCATION</scope>
    <scope>TISSUE SPECIFICITY</scope>
</reference>
<evidence type="ECO:0000255" key="1"/>
<evidence type="ECO:0000255" key="2">
    <source>
        <dbReference type="PROSITE-ProRule" id="PRU00024"/>
    </source>
</evidence>
<evidence type="ECO:0000255" key="3">
    <source>
        <dbReference type="PROSITE-ProRule" id="PRU00175"/>
    </source>
</evidence>
<evidence type="ECO:0000255" key="4">
    <source>
        <dbReference type="PROSITE-ProRule" id="PRU00316"/>
    </source>
</evidence>
<evidence type="ECO:0000255" key="5">
    <source>
        <dbReference type="PROSITE-ProRule" id="PRU00548"/>
    </source>
</evidence>
<evidence type="ECO:0000255" key="6">
    <source>
        <dbReference type="PROSITE-ProRule" id="PRU00586"/>
    </source>
</evidence>
<evidence type="ECO:0000256" key="7">
    <source>
        <dbReference type="SAM" id="MobiDB-lite"/>
    </source>
</evidence>
<evidence type="ECO:0000269" key="8">
    <source>
    </source>
</evidence>
<evidence type="ECO:0000303" key="9">
    <source>
    </source>
</evidence>
<evidence type="ECO:0000305" key="10"/>
<evidence type="ECO:0007744" key="11">
    <source>
    </source>
</evidence>
<dbReference type="EMBL" id="AY251388">
    <property type="protein sequence ID" value="AAP51208.1"/>
    <property type="molecule type" value="mRNA"/>
</dbReference>
<dbReference type="EMBL" id="BC065049">
    <property type="status" value="NOT_ANNOTATED_CDS"/>
    <property type="molecule type" value="mRNA"/>
</dbReference>
<dbReference type="EMBL" id="U16175">
    <property type="protein sequence ID" value="AAA98539.1"/>
    <property type="molecule type" value="Genomic_DNA"/>
</dbReference>
<dbReference type="CCDS" id="CCDS17497.1">
    <molecule id="Q7TNM2-1"/>
</dbReference>
<dbReference type="RefSeq" id="NP_898858.1">
    <molecule id="Q7TNM2-1"/>
    <property type="nucleotide sequence ID" value="NM_183037.2"/>
</dbReference>
<dbReference type="BioGRID" id="237527">
    <property type="interactions" value="4"/>
</dbReference>
<dbReference type="FunCoup" id="Q7TNM2">
    <property type="interactions" value="443"/>
</dbReference>
<dbReference type="IntAct" id="Q7TNM2">
    <property type="interactions" value="3"/>
</dbReference>
<dbReference type="MINT" id="Q7TNM2"/>
<dbReference type="STRING" id="10090.ENSMUSP00000036053"/>
<dbReference type="GlyGen" id="Q7TNM2">
    <property type="glycosylation" value="3 sites"/>
</dbReference>
<dbReference type="iPTMnet" id="Q7TNM2"/>
<dbReference type="PhosphoSitePlus" id="Q7TNM2"/>
<dbReference type="PaxDb" id="10090-ENSMUSP00000036053"/>
<dbReference type="ProteomicsDB" id="298301">
    <molecule id="Q7TNM2-1"/>
</dbReference>
<dbReference type="ProteomicsDB" id="298302">
    <molecule id="Q7TNM2-2"/>
</dbReference>
<dbReference type="Antibodypedia" id="34171">
    <property type="antibodies" value="99 antibodies from 19 providers"/>
</dbReference>
<dbReference type="Ensembl" id="ENSMUST00000041022.15">
    <molecule id="Q7TNM2-1"/>
    <property type="protein sequence ID" value="ENSMUSP00000036053.9"/>
    <property type="gene ID" value="ENSMUSG00000042766.18"/>
</dbReference>
<dbReference type="GeneID" id="360213"/>
<dbReference type="KEGG" id="mmu:360213"/>
<dbReference type="UCSC" id="uc008pyk.1">
    <molecule id="Q7TNM2-1"/>
    <property type="organism name" value="mouse"/>
</dbReference>
<dbReference type="AGR" id="MGI:2673000"/>
<dbReference type="CTD" id="80128"/>
<dbReference type="MGI" id="MGI:2673000">
    <property type="gene designation" value="Trim46"/>
</dbReference>
<dbReference type="VEuPathDB" id="HostDB:ENSMUSG00000042766"/>
<dbReference type="eggNOG" id="KOG2177">
    <property type="taxonomic scope" value="Eukaryota"/>
</dbReference>
<dbReference type="GeneTree" id="ENSGT00940000158021"/>
<dbReference type="InParanoid" id="Q7TNM2"/>
<dbReference type="OMA" id="XIARATE"/>
<dbReference type="OrthoDB" id="10040278at2759"/>
<dbReference type="PhylomeDB" id="Q7TNM2"/>
<dbReference type="TreeFam" id="TF315216"/>
<dbReference type="BioGRID-ORCS" id="360213">
    <property type="hits" value="5 hits in 79 CRISPR screens"/>
</dbReference>
<dbReference type="CD-CODE" id="CE726F99">
    <property type="entry name" value="Postsynaptic density"/>
</dbReference>
<dbReference type="ChiTaRS" id="Trim46">
    <property type="organism name" value="mouse"/>
</dbReference>
<dbReference type="PRO" id="PR:Q7TNM2"/>
<dbReference type="Proteomes" id="UP000000589">
    <property type="component" value="Chromosome 3"/>
</dbReference>
<dbReference type="RNAct" id="Q7TNM2">
    <property type="molecule type" value="protein"/>
</dbReference>
<dbReference type="Bgee" id="ENSMUSG00000042766">
    <property type="expression patterns" value="Expressed in embryonic brain and 121 other cell types or tissues"/>
</dbReference>
<dbReference type="ExpressionAtlas" id="Q7TNM2">
    <property type="expression patterns" value="baseline and differential"/>
</dbReference>
<dbReference type="GO" id="GO:1904115">
    <property type="term" value="C:axon cytoplasm"/>
    <property type="evidence" value="ECO:0007669"/>
    <property type="project" value="GOC"/>
</dbReference>
<dbReference type="GO" id="GO:0043194">
    <property type="term" value="C:axon initial segment"/>
    <property type="evidence" value="ECO:0000314"/>
    <property type="project" value="MGI"/>
</dbReference>
<dbReference type="GO" id="GO:0044304">
    <property type="term" value="C:main axon"/>
    <property type="evidence" value="ECO:0000314"/>
    <property type="project" value="ARUK-UCL"/>
</dbReference>
<dbReference type="GO" id="GO:0015630">
    <property type="term" value="C:microtubule cytoskeleton"/>
    <property type="evidence" value="ECO:0000266"/>
    <property type="project" value="MGI"/>
</dbReference>
<dbReference type="GO" id="GO:1990769">
    <property type="term" value="C:proximal neuron projection"/>
    <property type="evidence" value="ECO:0000315"/>
    <property type="project" value="MGI"/>
</dbReference>
<dbReference type="GO" id="GO:0008017">
    <property type="term" value="F:microtubule binding"/>
    <property type="evidence" value="ECO:0000266"/>
    <property type="project" value="MGI"/>
</dbReference>
<dbReference type="GO" id="GO:0008270">
    <property type="term" value="F:zinc ion binding"/>
    <property type="evidence" value="ECO:0007669"/>
    <property type="project" value="UniProtKB-KW"/>
</dbReference>
<dbReference type="GO" id="GO:0048490">
    <property type="term" value="P:anterograde synaptic vesicle transport"/>
    <property type="evidence" value="ECO:0000315"/>
    <property type="project" value="MGI"/>
</dbReference>
<dbReference type="GO" id="GO:0007409">
    <property type="term" value="P:axonogenesis"/>
    <property type="evidence" value="ECO:0000314"/>
    <property type="project" value="MGI"/>
</dbReference>
<dbReference type="GO" id="GO:0001578">
    <property type="term" value="P:microtubule bundle formation"/>
    <property type="evidence" value="ECO:0000315"/>
    <property type="project" value="MGI"/>
</dbReference>
<dbReference type="GO" id="GO:0000226">
    <property type="term" value="P:microtubule cytoskeleton organization"/>
    <property type="evidence" value="ECO:0000315"/>
    <property type="project" value="MGI"/>
</dbReference>
<dbReference type="GO" id="GO:0001764">
    <property type="term" value="P:neuron migration"/>
    <property type="evidence" value="ECO:0000314"/>
    <property type="project" value="MGI"/>
</dbReference>
<dbReference type="GO" id="GO:0099612">
    <property type="term" value="P:protein localization to axon"/>
    <property type="evidence" value="ECO:0000315"/>
    <property type="project" value="MGI"/>
</dbReference>
<dbReference type="GO" id="GO:0032880">
    <property type="term" value="P:regulation of protein localization"/>
    <property type="evidence" value="ECO:0000315"/>
    <property type="project" value="ARUK-UCL"/>
</dbReference>
<dbReference type="CDD" id="cd19849">
    <property type="entry name" value="Bbox1_TRIM46_C-I"/>
    <property type="match status" value="1"/>
</dbReference>
<dbReference type="CDD" id="cd19786">
    <property type="entry name" value="Bbox2_TRIM46_C-I"/>
    <property type="match status" value="1"/>
</dbReference>
<dbReference type="CDD" id="cd00063">
    <property type="entry name" value="FN3"/>
    <property type="match status" value="1"/>
</dbReference>
<dbReference type="CDD" id="cd16757">
    <property type="entry name" value="RING-HC_TRIM46_C-I"/>
    <property type="match status" value="1"/>
</dbReference>
<dbReference type="CDD" id="cd12895">
    <property type="entry name" value="SPRY_PRY_TRIM46"/>
    <property type="match status" value="1"/>
</dbReference>
<dbReference type="FunFam" id="4.10.830.40:FF:000001">
    <property type="entry name" value="E3 ubiquitin-protein ligase TRIM9 isoform X1"/>
    <property type="match status" value="1"/>
</dbReference>
<dbReference type="FunFam" id="2.60.40.10:FF:000471">
    <property type="entry name" value="Tripartite motif-containing 46, isoform CRA_c"/>
    <property type="match status" value="1"/>
</dbReference>
<dbReference type="FunFam" id="3.30.160.60:FF:000500">
    <property type="entry name" value="Tripartite motif-containing 46, isoform CRA_c"/>
    <property type="match status" value="1"/>
</dbReference>
<dbReference type="FunFam" id="3.30.40.10:FF:000243">
    <property type="entry name" value="Tripartite motif-containing 46, isoform CRA_c"/>
    <property type="match status" value="1"/>
</dbReference>
<dbReference type="FunFam" id="2.60.120.920:FF:000026">
    <property type="entry name" value="tripartite motif-containing protein 46 isoform X2"/>
    <property type="match status" value="1"/>
</dbReference>
<dbReference type="Gene3D" id="1.20.5.170">
    <property type="match status" value="1"/>
</dbReference>
<dbReference type="Gene3D" id="2.60.120.920">
    <property type="match status" value="1"/>
</dbReference>
<dbReference type="Gene3D" id="4.10.830.40">
    <property type="match status" value="1"/>
</dbReference>
<dbReference type="Gene3D" id="3.30.160.60">
    <property type="entry name" value="Classic Zinc Finger"/>
    <property type="match status" value="1"/>
</dbReference>
<dbReference type="Gene3D" id="2.60.40.10">
    <property type="entry name" value="Immunoglobulins"/>
    <property type="match status" value="1"/>
</dbReference>
<dbReference type="Gene3D" id="3.30.40.10">
    <property type="entry name" value="Zinc/RING finger domain, C3HC4 (zinc finger)"/>
    <property type="match status" value="1"/>
</dbReference>
<dbReference type="InterPro" id="IPR001870">
    <property type="entry name" value="B30.2/SPRY"/>
</dbReference>
<dbReference type="InterPro" id="IPR043136">
    <property type="entry name" value="B30.2/SPRY_sf"/>
</dbReference>
<dbReference type="InterPro" id="IPR013320">
    <property type="entry name" value="ConA-like_dom_sf"/>
</dbReference>
<dbReference type="InterPro" id="IPR017903">
    <property type="entry name" value="COS_domain"/>
</dbReference>
<dbReference type="InterPro" id="IPR050617">
    <property type="entry name" value="E3_ligase_FN3/SPRY"/>
</dbReference>
<dbReference type="InterPro" id="IPR003961">
    <property type="entry name" value="FN3_dom"/>
</dbReference>
<dbReference type="InterPro" id="IPR036116">
    <property type="entry name" value="FN3_sf"/>
</dbReference>
<dbReference type="InterPro" id="IPR013783">
    <property type="entry name" value="Ig-like_fold"/>
</dbReference>
<dbReference type="InterPro" id="IPR040859">
    <property type="entry name" value="Midline-1_COS"/>
</dbReference>
<dbReference type="InterPro" id="IPR035731">
    <property type="entry name" value="SPRY/PRY_TRIM46"/>
</dbReference>
<dbReference type="InterPro" id="IPR027370">
    <property type="entry name" value="Znf-RING_euk"/>
</dbReference>
<dbReference type="InterPro" id="IPR000315">
    <property type="entry name" value="Znf_B-box"/>
</dbReference>
<dbReference type="InterPro" id="IPR001841">
    <property type="entry name" value="Znf_RING"/>
</dbReference>
<dbReference type="InterPro" id="IPR013083">
    <property type="entry name" value="Znf_RING/FYVE/PHD"/>
</dbReference>
<dbReference type="InterPro" id="IPR017907">
    <property type="entry name" value="Znf_RING_CS"/>
</dbReference>
<dbReference type="PANTHER" id="PTHR24099">
    <property type="entry name" value="E3 UBIQUITIN-PROTEIN LIGASE TRIM36-RELATED"/>
    <property type="match status" value="1"/>
</dbReference>
<dbReference type="PANTHER" id="PTHR24099:SF20">
    <property type="entry name" value="TRIPARTITE MOTIF-CONTAINING PROTEIN 46"/>
    <property type="match status" value="1"/>
</dbReference>
<dbReference type="Pfam" id="PF18568">
    <property type="entry name" value="COS"/>
    <property type="match status" value="1"/>
</dbReference>
<dbReference type="Pfam" id="PF00643">
    <property type="entry name" value="zf-B_box"/>
    <property type="match status" value="1"/>
</dbReference>
<dbReference type="Pfam" id="PF13445">
    <property type="entry name" value="zf-RING_UBOX"/>
    <property type="match status" value="1"/>
</dbReference>
<dbReference type="SMART" id="SM00336">
    <property type="entry name" value="BBOX"/>
    <property type="match status" value="1"/>
</dbReference>
<dbReference type="SMART" id="SM00184">
    <property type="entry name" value="RING"/>
    <property type="match status" value="1"/>
</dbReference>
<dbReference type="SUPFAM" id="SSF57845">
    <property type="entry name" value="B-box zinc-binding domain"/>
    <property type="match status" value="1"/>
</dbReference>
<dbReference type="SUPFAM" id="SSF49899">
    <property type="entry name" value="Concanavalin A-like lectins/glucanases"/>
    <property type="match status" value="1"/>
</dbReference>
<dbReference type="SUPFAM" id="SSF49265">
    <property type="entry name" value="Fibronectin type III"/>
    <property type="match status" value="1"/>
</dbReference>
<dbReference type="SUPFAM" id="SSF57850">
    <property type="entry name" value="RING/U-box"/>
    <property type="match status" value="1"/>
</dbReference>
<dbReference type="PROSITE" id="PS50188">
    <property type="entry name" value="B302_SPRY"/>
    <property type="match status" value="1"/>
</dbReference>
<dbReference type="PROSITE" id="PS51262">
    <property type="entry name" value="COS"/>
    <property type="match status" value="1"/>
</dbReference>
<dbReference type="PROSITE" id="PS50853">
    <property type="entry name" value="FN3"/>
    <property type="match status" value="1"/>
</dbReference>
<dbReference type="PROSITE" id="PS50119">
    <property type="entry name" value="ZF_BBOX"/>
    <property type="match status" value="1"/>
</dbReference>
<dbReference type="PROSITE" id="PS00518">
    <property type="entry name" value="ZF_RING_1"/>
    <property type="match status" value="1"/>
</dbReference>
<accession>Q7TNM2</accession>
<accession>Q60717</accession>
<accession>Q6P1I9</accession>